<protein>
    <recommendedName>
        <fullName evidence="4">L-lactate dehydrogenase</fullName>
        <ecNumber>1.1.1.27</ecNumber>
    </recommendedName>
</protein>
<comment type="catalytic activity">
    <reaction>
        <text>(S)-lactate + NAD(+) = pyruvate + NADH + H(+)</text>
        <dbReference type="Rhea" id="RHEA:23444"/>
        <dbReference type="ChEBI" id="CHEBI:15361"/>
        <dbReference type="ChEBI" id="CHEBI:15378"/>
        <dbReference type="ChEBI" id="CHEBI:16651"/>
        <dbReference type="ChEBI" id="CHEBI:57540"/>
        <dbReference type="ChEBI" id="CHEBI:57945"/>
        <dbReference type="EC" id="1.1.1.27"/>
    </reaction>
</comment>
<comment type="pathway">
    <text>Fermentation; pyruvate fermentation to lactate; (S)-lactate from pyruvate: step 1/1.</text>
</comment>
<comment type="subunit">
    <text evidence="1">Homotetramer.</text>
</comment>
<comment type="subcellular location">
    <subcellularLocation>
        <location evidence="1">Cytoplasm</location>
    </subcellularLocation>
</comment>
<comment type="similarity">
    <text evidence="3">Belongs to the LDH/MDH superfamily. LDH family.</text>
</comment>
<proteinExistence type="evidence at transcript level"/>
<keyword id="KW-0963">Cytoplasm</keyword>
<keyword id="KW-0520">NAD</keyword>
<keyword id="KW-0560">Oxidoreductase</keyword>
<keyword id="KW-1185">Reference proteome</keyword>
<feature type="chain" id="PRO_0000168494" description="L-lactate dehydrogenase">
    <location>
        <begin position="1"/>
        <end position="332"/>
    </location>
</feature>
<feature type="active site" description="Proton acceptor" evidence="1">
    <location>
        <position position="193"/>
    </location>
</feature>
<feature type="binding site" evidence="1">
    <location>
        <begin position="29"/>
        <end position="57"/>
    </location>
    <ligand>
        <name>NAD(+)</name>
        <dbReference type="ChEBI" id="CHEBI:57540"/>
    </ligand>
</feature>
<feature type="binding site" evidence="1">
    <location>
        <position position="99"/>
    </location>
    <ligand>
        <name>NAD(+)</name>
        <dbReference type="ChEBI" id="CHEBI:57540"/>
    </ligand>
</feature>
<feature type="binding site" evidence="1">
    <location>
        <position position="106"/>
    </location>
    <ligand>
        <name>substrate</name>
    </ligand>
</feature>
<feature type="binding site" evidence="1">
    <location>
        <position position="138"/>
    </location>
    <ligand>
        <name>NAD(+)</name>
        <dbReference type="ChEBI" id="CHEBI:57540"/>
    </ligand>
</feature>
<feature type="binding site" evidence="1">
    <location>
        <position position="138"/>
    </location>
    <ligand>
        <name>substrate</name>
    </ligand>
</feature>
<feature type="binding site" evidence="1">
    <location>
        <position position="169"/>
    </location>
    <ligand>
        <name>substrate</name>
    </ligand>
</feature>
<feature type="binding site" evidence="1">
    <location>
        <position position="248"/>
    </location>
    <ligand>
        <name>substrate</name>
    </ligand>
</feature>
<evidence type="ECO:0000250" key="1"/>
<evidence type="ECO:0000303" key="2">
    <source>
    </source>
</evidence>
<evidence type="ECO:0000305" key="3"/>
<evidence type="ECO:0000312" key="4">
    <source>
        <dbReference type="FlyBase" id="FBgn0001258"/>
    </source>
</evidence>
<dbReference type="EC" id="1.1.1.27"/>
<dbReference type="EMBL" id="U68038">
    <property type="protein sequence ID" value="AAB07594.1"/>
    <property type="molecule type" value="mRNA"/>
</dbReference>
<dbReference type="EMBL" id="AE014296">
    <property type="protein sequence ID" value="AAF50666.1"/>
    <property type="molecule type" value="Genomic_DNA"/>
</dbReference>
<dbReference type="RefSeq" id="NP_001261474.1">
    <property type="nucleotide sequence ID" value="NM_001274545.2"/>
</dbReference>
<dbReference type="RefSeq" id="NP_001261475.1">
    <property type="nucleotide sequence ID" value="NM_001274546.1"/>
</dbReference>
<dbReference type="RefSeq" id="NP_001261476.1">
    <property type="nucleotide sequence ID" value="NM_001274547.1"/>
</dbReference>
<dbReference type="RefSeq" id="NP_476581.1">
    <property type="nucleotide sequence ID" value="NM_057233.5"/>
</dbReference>
<dbReference type="SMR" id="Q95028"/>
<dbReference type="BioGRID" id="69949">
    <property type="interactions" value="66"/>
</dbReference>
<dbReference type="DIP" id="DIP-17530N"/>
<dbReference type="FunCoup" id="Q95028">
    <property type="interactions" value="267"/>
</dbReference>
<dbReference type="IntAct" id="Q95028">
    <property type="interactions" value="67"/>
</dbReference>
<dbReference type="STRING" id="7227.FBpp0304375"/>
<dbReference type="GlyGen" id="Q95028">
    <property type="glycosylation" value="1 site"/>
</dbReference>
<dbReference type="PaxDb" id="7227-FBpp0304375"/>
<dbReference type="DNASU" id="45880"/>
<dbReference type="EnsemblMetazoa" id="FBtr0077008">
    <property type="protein sequence ID" value="FBpp0076716"/>
    <property type="gene ID" value="FBgn0001258"/>
</dbReference>
<dbReference type="EnsemblMetazoa" id="FBtr0332065">
    <property type="protein sequence ID" value="FBpp0304375"/>
    <property type="gene ID" value="FBgn0001258"/>
</dbReference>
<dbReference type="EnsemblMetazoa" id="FBtr0332066">
    <property type="protein sequence ID" value="FBpp0304376"/>
    <property type="gene ID" value="FBgn0001258"/>
</dbReference>
<dbReference type="EnsemblMetazoa" id="FBtr0332067">
    <property type="protein sequence ID" value="FBpp0304377"/>
    <property type="gene ID" value="FBgn0001258"/>
</dbReference>
<dbReference type="GeneID" id="45880"/>
<dbReference type="KEGG" id="dme:Dmel_CG10160"/>
<dbReference type="AGR" id="FB:FBgn0001258"/>
<dbReference type="CTD" id="45880"/>
<dbReference type="FlyBase" id="FBgn0001258">
    <property type="gene designation" value="Ldh"/>
</dbReference>
<dbReference type="VEuPathDB" id="VectorBase:FBgn0001258"/>
<dbReference type="eggNOG" id="KOG1495">
    <property type="taxonomic scope" value="Eukaryota"/>
</dbReference>
<dbReference type="GeneTree" id="ENSGT00940000164122"/>
<dbReference type="HOGENOM" id="CLU_045401_0_2_1"/>
<dbReference type="InParanoid" id="Q95028"/>
<dbReference type="OMA" id="THLDSMR"/>
<dbReference type="OrthoDB" id="5405561at2759"/>
<dbReference type="PhylomeDB" id="Q95028"/>
<dbReference type="Reactome" id="R-DME-70268">
    <property type="pathway name" value="Pyruvate metabolism"/>
</dbReference>
<dbReference type="Reactome" id="R-DME-9861718">
    <property type="pathway name" value="Regulation of pyruvate metabolism"/>
</dbReference>
<dbReference type="SignaLink" id="Q95028"/>
<dbReference type="UniPathway" id="UPA00554">
    <property type="reaction ID" value="UER00611"/>
</dbReference>
<dbReference type="BioGRID-ORCS" id="45880">
    <property type="hits" value="0 hits in 3 CRISPR screens"/>
</dbReference>
<dbReference type="GenomeRNAi" id="45880"/>
<dbReference type="PRO" id="PR:Q95028"/>
<dbReference type="Proteomes" id="UP000000803">
    <property type="component" value="Chromosome 3L"/>
</dbReference>
<dbReference type="Bgee" id="FBgn0001258">
    <property type="expression patterns" value="Expressed in adult middle midgut class II enteroendocrine cell in adult midgut (Drosophila) and 105 other cell types or tissues"/>
</dbReference>
<dbReference type="ExpressionAtlas" id="Q95028">
    <property type="expression patterns" value="baseline and differential"/>
</dbReference>
<dbReference type="GO" id="GO:0005829">
    <property type="term" value="C:cytosol"/>
    <property type="evidence" value="ECO:0000314"/>
    <property type="project" value="FlyBase"/>
</dbReference>
<dbReference type="GO" id="GO:0005739">
    <property type="term" value="C:mitochondrion"/>
    <property type="evidence" value="ECO:0000318"/>
    <property type="project" value="GO_Central"/>
</dbReference>
<dbReference type="GO" id="GO:0061759">
    <property type="term" value="F:alpha-ketoglutarate reductase activity"/>
    <property type="evidence" value="ECO:0000314"/>
    <property type="project" value="FlyBase"/>
</dbReference>
<dbReference type="GO" id="GO:0004459">
    <property type="term" value="F:L-lactate dehydrogenase activity"/>
    <property type="evidence" value="ECO:0000314"/>
    <property type="project" value="FlyBase"/>
</dbReference>
<dbReference type="GO" id="GO:0006096">
    <property type="term" value="P:glycolytic process"/>
    <property type="evidence" value="ECO:0000316"/>
    <property type="project" value="FlyBase"/>
</dbReference>
<dbReference type="GO" id="GO:0019244">
    <property type="term" value="P:lactate biosynthetic process from pyruvate"/>
    <property type="evidence" value="ECO:0000314"/>
    <property type="project" value="FlyBase"/>
</dbReference>
<dbReference type="GO" id="GO:1903457">
    <property type="term" value="P:lactate catabolic process"/>
    <property type="evidence" value="ECO:0000314"/>
    <property type="project" value="FlyBase"/>
</dbReference>
<dbReference type="GO" id="GO:0006089">
    <property type="term" value="P:lactate metabolic process"/>
    <property type="evidence" value="ECO:0000318"/>
    <property type="project" value="GO_Central"/>
</dbReference>
<dbReference type="GO" id="GO:0006734">
    <property type="term" value="P:NADH metabolic process"/>
    <property type="evidence" value="ECO:0000315"/>
    <property type="project" value="FlyBase"/>
</dbReference>
<dbReference type="GO" id="GO:0042866">
    <property type="term" value="P:pyruvate biosynthetic process"/>
    <property type="evidence" value="ECO:0000314"/>
    <property type="project" value="FlyBase"/>
</dbReference>
<dbReference type="GO" id="GO:0042867">
    <property type="term" value="P:pyruvate catabolic process"/>
    <property type="evidence" value="ECO:0000314"/>
    <property type="project" value="FlyBase"/>
</dbReference>
<dbReference type="GO" id="GO:0006090">
    <property type="term" value="P:pyruvate metabolic process"/>
    <property type="evidence" value="ECO:0000318"/>
    <property type="project" value="GO_Central"/>
</dbReference>
<dbReference type="CDD" id="cd05293">
    <property type="entry name" value="LDH_1"/>
    <property type="match status" value="1"/>
</dbReference>
<dbReference type="FunFam" id="3.90.110.10:FF:000003">
    <property type="entry name" value="L-lactate dehydrogenase A chain"/>
    <property type="match status" value="1"/>
</dbReference>
<dbReference type="FunFam" id="3.40.50.720:FF:000018">
    <property type="entry name" value="Malate dehydrogenase"/>
    <property type="match status" value="1"/>
</dbReference>
<dbReference type="Gene3D" id="3.90.110.10">
    <property type="entry name" value="Lactate dehydrogenase/glycoside hydrolase, family 4, C-terminal"/>
    <property type="match status" value="1"/>
</dbReference>
<dbReference type="Gene3D" id="3.40.50.720">
    <property type="entry name" value="NAD(P)-binding Rossmann-like Domain"/>
    <property type="match status" value="1"/>
</dbReference>
<dbReference type="HAMAP" id="MF_00488">
    <property type="entry name" value="Lactate_dehydrog"/>
    <property type="match status" value="1"/>
</dbReference>
<dbReference type="InterPro" id="IPR001557">
    <property type="entry name" value="L-lactate/malate_DH"/>
</dbReference>
<dbReference type="InterPro" id="IPR011304">
    <property type="entry name" value="L-lactate_DH"/>
</dbReference>
<dbReference type="InterPro" id="IPR018177">
    <property type="entry name" value="L-lactate_DH_AS"/>
</dbReference>
<dbReference type="InterPro" id="IPR022383">
    <property type="entry name" value="Lactate/malate_DH_C"/>
</dbReference>
<dbReference type="InterPro" id="IPR001236">
    <property type="entry name" value="Lactate/malate_DH_N"/>
</dbReference>
<dbReference type="InterPro" id="IPR015955">
    <property type="entry name" value="Lactate_DH/Glyco_Ohase_4_C"/>
</dbReference>
<dbReference type="InterPro" id="IPR036291">
    <property type="entry name" value="NAD(P)-bd_dom_sf"/>
</dbReference>
<dbReference type="NCBIfam" id="TIGR01771">
    <property type="entry name" value="L-LDH-NAD"/>
    <property type="match status" value="1"/>
</dbReference>
<dbReference type="PANTHER" id="PTHR43128">
    <property type="entry name" value="L-2-HYDROXYCARBOXYLATE DEHYDROGENASE (NAD(P)(+))"/>
    <property type="match status" value="1"/>
</dbReference>
<dbReference type="PANTHER" id="PTHR43128:SF16">
    <property type="entry name" value="L-LACTATE DEHYDROGENASE"/>
    <property type="match status" value="1"/>
</dbReference>
<dbReference type="Pfam" id="PF02866">
    <property type="entry name" value="Ldh_1_C"/>
    <property type="match status" value="1"/>
</dbReference>
<dbReference type="Pfam" id="PF00056">
    <property type="entry name" value="Ldh_1_N"/>
    <property type="match status" value="1"/>
</dbReference>
<dbReference type="PIRSF" id="PIRSF000102">
    <property type="entry name" value="Lac_mal_DH"/>
    <property type="match status" value="1"/>
</dbReference>
<dbReference type="PRINTS" id="PR00086">
    <property type="entry name" value="LLDHDRGNASE"/>
</dbReference>
<dbReference type="SUPFAM" id="SSF56327">
    <property type="entry name" value="LDH C-terminal domain-like"/>
    <property type="match status" value="1"/>
</dbReference>
<dbReference type="SUPFAM" id="SSF51735">
    <property type="entry name" value="NAD(P)-binding Rossmann-fold domains"/>
    <property type="match status" value="1"/>
</dbReference>
<dbReference type="PROSITE" id="PS00064">
    <property type="entry name" value="L_LDH"/>
    <property type="match status" value="1"/>
</dbReference>
<reference key="1">
    <citation type="journal article" date="1997" name="Dev. Genet.">
        <title>IMP-L3, A 20-hydroxyecdysone-responsive gene encodes Drosophila lactate dehydrogenase: structural characterization and developmental studies.</title>
        <authorList>
            <person name="Abu-Shumays R.L."/>
            <person name="Fristrom J.W."/>
        </authorList>
    </citation>
    <scope>NUCLEOTIDE SEQUENCE [MRNA]</scope>
    <source>
        <strain>Oregon-R</strain>
    </source>
</reference>
<reference key="2">
    <citation type="journal article" date="2000" name="Science">
        <title>The genome sequence of Drosophila melanogaster.</title>
        <authorList>
            <person name="Adams M.D."/>
            <person name="Celniker S.E."/>
            <person name="Holt R.A."/>
            <person name="Evans C.A."/>
            <person name="Gocayne J.D."/>
            <person name="Amanatides P.G."/>
            <person name="Scherer S.E."/>
            <person name="Li P.W."/>
            <person name="Hoskins R.A."/>
            <person name="Galle R.F."/>
            <person name="George R.A."/>
            <person name="Lewis S.E."/>
            <person name="Richards S."/>
            <person name="Ashburner M."/>
            <person name="Henderson S.N."/>
            <person name="Sutton G.G."/>
            <person name="Wortman J.R."/>
            <person name="Yandell M.D."/>
            <person name="Zhang Q."/>
            <person name="Chen L.X."/>
            <person name="Brandon R.C."/>
            <person name="Rogers Y.-H.C."/>
            <person name="Blazej R.G."/>
            <person name="Champe M."/>
            <person name="Pfeiffer B.D."/>
            <person name="Wan K.H."/>
            <person name="Doyle C."/>
            <person name="Baxter E.G."/>
            <person name="Helt G."/>
            <person name="Nelson C.R."/>
            <person name="Miklos G.L.G."/>
            <person name="Abril J.F."/>
            <person name="Agbayani A."/>
            <person name="An H.-J."/>
            <person name="Andrews-Pfannkoch C."/>
            <person name="Baldwin D."/>
            <person name="Ballew R.M."/>
            <person name="Basu A."/>
            <person name="Baxendale J."/>
            <person name="Bayraktaroglu L."/>
            <person name="Beasley E.M."/>
            <person name="Beeson K.Y."/>
            <person name="Benos P.V."/>
            <person name="Berman B.P."/>
            <person name="Bhandari D."/>
            <person name="Bolshakov S."/>
            <person name="Borkova D."/>
            <person name="Botchan M.R."/>
            <person name="Bouck J."/>
            <person name="Brokstein P."/>
            <person name="Brottier P."/>
            <person name="Burtis K.C."/>
            <person name="Busam D.A."/>
            <person name="Butler H."/>
            <person name="Cadieu E."/>
            <person name="Center A."/>
            <person name="Chandra I."/>
            <person name="Cherry J.M."/>
            <person name="Cawley S."/>
            <person name="Dahlke C."/>
            <person name="Davenport L.B."/>
            <person name="Davies P."/>
            <person name="de Pablos B."/>
            <person name="Delcher A."/>
            <person name="Deng Z."/>
            <person name="Mays A.D."/>
            <person name="Dew I."/>
            <person name="Dietz S.M."/>
            <person name="Dodson K."/>
            <person name="Doup L.E."/>
            <person name="Downes M."/>
            <person name="Dugan-Rocha S."/>
            <person name="Dunkov B.C."/>
            <person name="Dunn P."/>
            <person name="Durbin K.J."/>
            <person name="Evangelista C.C."/>
            <person name="Ferraz C."/>
            <person name="Ferriera S."/>
            <person name="Fleischmann W."/>
            <person name="Fosler C."/>
            <person name="Gabrielian A.E."/>
            <person name="Garg N.S."/>
            <person name="Gelbart W.M."/>
            <person name="Glasser K."/>
            <person name="Glodek A."/>
            <person name="Gong F."/>
            <person name="Gorrell J.H."/>
            <person name="Gu Z."/>
            <person name="Guan P."/>
            <person name="Harris M."/>
            <person name="Harris N.L."/>
            <person name="Harvey D.A."/>
            <person name="Heiman T.J."/>
            <person name="Hernandez J.R."/>
            <person name="Houck J."/>
            <person name="Hostin D."/>
            <person name="Houston K.A."/>
            <person name="Howland T.J."/>
            <person name="Wei M.-H."/>
            <person name="Ibegwam C."/>
            <person name="Jalali M."/>
            <person name="Kalush F."/>
            <person name="Karpen G.H."/>
            <person name="Ke Z."/>
            <person name="Kennison J.A."/>
            <person name="Ketchum K.A."/>
            <person name="Kimmel B.E."/>
            <person name="Kodira C.D."/>
            <person name="Kraft C.L."/>
            <person name="Kravitz S."/>
            <person name="Kulp D."/>
            <person name="Lai Z."/>
            <person name="Lasko P."/>
            <person name="Lei Y."/>
            <person name="Levitsky A.A."/>
            <person name="Li J.H."/>
            <person name="Li Z."/>
            <person name="Liang Y."/>
            <person name="Lin X."/>
            <person name="Liu X."/>
            <person name="Mattei B."/>
            <person name="McIntosh T.C."/>
            <person name="McLeod M.P."/>
            <person name="McPherson D."/>
            <person name="Merkulov G."/>
            <person name="Milshina N.V."/>
            <person name="Mobarry C."/>
            <person name="Morris J."/>
            <person name="Moshrefi A."/>
            <person name="Mount S.M."/>
            <person name="Moy M."/>
            <person name="Murphy B."/>
            <person name="Murphy L."/>
            <person name="Muzny D.M."/>
            <person name="Nelson D.L."/>
            <person name="Nelson D.R."/>
            <person name="Nelson K.A."/>
            <person name="Nixon K."/>
            <person name="Nusskern D.R."/>
            <person name="Pacleb J.M."/>
            <person name="Palazzolo M."/>
            <person name="Pittman G.S."/>
            <person name="Pan S."/>
            <person name="Pollard J."/>
            <person name="Puri V."/>
            <person name="Reese M.G."/>
            <person name="Reinert K."/>
            <person name="Remington K."/>
            <person name="Saunders R.D.C."/>
            <person name="Scheeler F."/>
            <person name="Shen H."/>
            <person name="Shue B.C."/>
            <person name="Siden-Kiamos I."/>
            <person name="Simpson M."/>
            <person name="Skupski M.P."/>
            <person name="Smith T.J."/>
            <person name="Spier E."/>
            <person name="Spradling A.C."/>
            <person name="Stapleton M."/>
            <person name="Strong R."/>
            <person name="Sun E."/>
            <person name="Svirskas R."/>
            <person name="Tector C."/>
            <person name="Turner R."/>
            <person name="Venter E."/>
            <person name="Wang A.H."/>
            <person name="Wang X."/>
            <person name="Wang Z.-Y."/>
            <person name="Wassarman D.A."/>
            <person name="Weinstock G.M."/>
            <person name="Weissenbach J."/>
            <person name="Williams S.M."/>
            <person name="Woodage T."/>
            <person name="Worley K.C."/>
            <person name="Wu D."/>
            <person name="Yang S."/>
            <person name="Yao Q.A."/>
            <person name="Ye J."/>
            <person name="Yeh R.-F."/>
            <person name="Zaveri J.S."/>
            <person name="Zhan M."/>
            <person name="Zhang G."/>
            <person name="Zhao Q."/>
            <person name="Zheng L."/>
            <person name="Zheng X.H."/>
            <person name="Zhong F.N."/>
            <person name="Zhong W."/>
            <person name="Zhou X."/>
            <person name="Zhu S.C."/>
            <person name="Zhu X."/>
            <person name="Smith H.O."/>
            <person name="Gibbs R.A."/>
            <person name="Myers E.W."/>
            <person name="Rubin G.M."/>
            <person name="Venter J.C."/>
        </authorList>
    </citation>
    <scope>NUCLEOTIDE SEQUENCE [LARGE SCALE GENOMIC DNA]</scope>
    <source>
        <strain>Berkeley</strain>
    </source>
</reference>
<reference key="3">
    <citation type="journal article" date="2002" name="Genome Biol.">
        <title>Annotation of the Drosophila melanogaster euchromatic genome: a systematic review.</title>
        <authorList>
            <person name="Misra S."/>
            <person name="Crosby M.A."/>
            <person name="Mungall C.J."/>
            <person name="Matthews B.B."/>
            <person name="Campbell K.S."/>
            <person name="Hradecky P."/>
            <person name="Huang Y."/>
            <person name="Kaminker J.S."/>
            <person name="Millburn G.H."/>
            <person name="Prochnik S.E."/>
            <person name="Smith C.D."/>
            <person name="Tupy J.L."/>
            <person name="Whitfield E.J."/>
            <person name="Bayraktaroglu L."/>
            <person name="Berman B.P."/>
            <person name="Bettencourt B.R."/>
            <person name="Celniker S.E."/>
            <person name="de Grey A.D.N.J."/>
            <person name="Drysdale R.A."/>
            <person name="Harris N.L."/>
            <person name="Richter J."/>
            <person name="Russo S."/>
            <person name="Schroeder A.J."/>
            <person name="Shu S.Q."/>
            <person name="Stapleton M."/>
            <person name="Yamada C."/>
            <person name="Ashburner M."/>
            <person name="Gelbart W.M."/>
            <person name="Rubin G.M."/>
            <person name="Lewis S.E."/>
        </authorList>
    </citation>
    <scope>GENOME REANNOTATION</scope>
    <source>
        <strain>Berkeley</strain>
    </source>
</reference>
<sequence>MAAIKDSLLAQVAEVLPSSGHKVTIVGIGQVGMASAFSILAQNVSKEVCLIDVCADKLQGELMDLQHGSNFLKNPQITASTDFAASANSRLCIVTAGVRQKEGESRLSLVQRNTDILKNIIPKLVEYSPDTILLMVSNPVDIMTYVAWKLSGLPKNRVIGSGTNLDSSRFRFLMSQRLGVAPTSCHGWIIGEHGDSSVPVWSGVNIAGVRLRELNPILGTGEDPEKWNELHKQVVDSAYEVIKLKGYTSWAIGLSTASLASAILRNTSSVAAVSTSVLGEHGIDKDVFLSLPCVLNANGVTSVVKQILTPTEVEQLQKSANIMSDVQAGLKF</sequence>
<organism>
    <name type="scientific">Drosophila melanogaster</name>
    <name type="common">Fruit fly</name>
    <dbReference type="NCBI Taxonomy" id="7227"/>
    <lineage>
        <taxon>Eukaryota</taxon>
        <taxon>Metazoa</taxon>
        <taxon>Ecdysozoa</taxon>
        <taxon>Arthropoda</taxon>
        <taxon>Hexapoda</taxon>
        <taxon>Insecta</taxon>
        <taxon>Pterygota</taxon>
        <taxon>Neoptera</taxon>
        <taxon>Endopterygota</taxon>
        <taxon>Diptera</taxon>
        <taxon>Brachycera</taxon>
        <taxon>Muscomorpha</taxon>
        <taxon>Ephydroidea</taxon>
        <taxon>Drosophilidae</taxon>
        <taxon>Drosophila</taxon>
        <taxon>Sophophora</taxon>
    </lineage>
</organism>
<name>LDH_DROME</name>
<accession>Q95028</accession>
<accession>Q9VRW6</accession>
<gene>
    <name evidence="4" type="primary">Ldh</name>
    <name evidence="2" type="synonym">Imp-L3</name>
    <name evidence="4" type="synonym">ImpL3</name>
    <name evidence="4" type="ORF">CG10160</name>
</gene>